<feature type="chain" id="PRO_1000073429" description="Large ribosomal subunit protein bL17">
    <location>
        <begin position="1"/>
        <end position="139"/>
    </location>
</feature>
<name>RL17_AZOC5</name>
<proteinExistence type="inferred from homology"/>
<keyword id="KW-1185">Reference proteome</keyword>
<keyword id="KW-0687">Ribonucleoprotein</keyword>
<keyword id="KW-0689">Ribosomal protein</keyword>
<dbReference type="EMBL" id="AP009384">
    <property type="protein sequence ID" value="BAF88527.1"/>
    <property type="molecule type" value="Genomic_DNA"/>
</dbReference>
<dbReference type="RefSeq" id="WP_012171055.1">
    <property type="nucleotide sequence ID" value="NC_009937.1"/>
</dbReference>
<dbReference type="SMR" id="A8IAN3"/>
<dbReference type="STRING" id="438753.AZC_2529"/>
<dbReference type="KEGG" id="azc:AZC_2529"/>
<dbReference type="eggNOG" id="COG0203">
    <property type="taxonomic scope" value="Bacteria"/>
</dbReference>
<dbReference type="HOGENOM" id="CLU_074407_2_0_5"/>
<dbReference type="Proteomes" id="UP000000270">
    <property type="component" value="Chromosome"/>
</dbReference>
<dbReference type="GO" id="GO:0022625">
    <property type="term" value="C:cytosolic large ribosomal subunit"/>
    <property type="evidence" value="ECO:0007669"/>
    <property type="project" value="TreeGrafter"/>
</dbReference>
<dbReference type="GO" id="GO:0003735">
    <property type="term" value="F:structural constituent of ribosome"/>
    <property type="evidence" value="ECO:0007669"/>
    <property type="project" value="InterPro"/>
</dbReference>
<dbReference type="GO" id="GO:0006412">
    <property type="term" value="P:translation"/>
    <property type="evidence" value="ECO:0007669"/>
    <property type="project" value="UniProtKB-UniRule"/>
</dbReference>
<dbReference type="FunFam" id="3.90.1030.10:FF:000001">
    <property type="entry name" value="50S ribosomal protein L17"/>
    <property type="match status" value="1"/>
</dbReference>
<dbReference type="Gene3D" id="3.90.1030.10">
    <property type="entry name" value="Ribosomal protein L17"/>
    <property type="match status" value="1"/>
</dbReference>
<dbReference type="HAMAP" id="MF_01368">
    <property type="entry name" value="Ribosomal_bL17"/>
    <property type="match status" value="1"/>
</dbReference>
<dbReference type="InterPro" id="IPR000456">
    <property type="entry name" value="Ribosomal_bL17"/>
</dbReference>
<dbReference type="InterPro" id="IPR047859">
    <property type="entry name" value="Ribosomal_bL17_CS"/>
</dbReference>
<dbReference type="InterPro" id="IPR036373">
    <property type="entry name" value="Ribosomal_bL17_sf"/>
</dbReference>
<dbReference type="NCBIfam" id="TIGR00059">
    <property type="entry name" value="L17"/>
    <property type="match status" value="1"/>
</dbReference>
<dbReference type="PANTHER" id="PTHR14413:SF16">
    <property type="entry name" value="LARGE RIBOSOMAL SUBUNIT PROTEIN BL17M"/>
    <property type="match status" value="1"/>
</dbReference>
<dbReference type="PANTHER" id="PTHR14413">
    <property type="entry name" value="RIBOSOMAL PROTEIN L17"/>
    <property type="match status" value="1"/>
</dbReference>
<dbReference type="Pfam" id="PF01196">
    <property type="entry name" value="Ribosomal_L17"/>
    <property type="match status" value="1"/>
</dbReference>
<dbReference type="SUPFAM" id="SSF64263">
    <property type="entry name" value="Prokaryotic ribosomal protein L17"/>
    <property type="match status" value="1"/>
</dbReference>
<dbReference type="PROSITE" id="PS01167">
    <property type="entry name" value="RIBOSOMAL_L17"/>
    <property type="match status" value="1"/>
</dbReference>
<sequence>MRHGKVHRKFNRTAEHRKAMFANLAGALITHEQIVTTLPKAKDLRPVVEKLVTLARRGDLHARRQAIAELRDLNVVKKLFDVLAKRYEGRPGGYTRIIKAGFRYGDSTPVAVIEFVDRDVDAKGAADRARAEAAEAVAA</sequence>
<evidence type="ECO:0000255" key="1">
    <source>
        <dbReference type="HAMAP-Rule" id="MF_01368"/>
    </source>
</evidence>
<evidence type="ECO:0000305" key="2"/>
<organism>
    <name type="scientific">Azorhizobium caulinodans (strain ATCC 43989 / DSM 5975 / JCM 20966 / LMG 6465 / NBRC 14845 / NCIMB 13405 / ORS 571)</name>
    <dbReference type="NCBI Taxonomy" id="438753"/>
    <lineage>
        <taxon>Bacteria</taxon>
        <taxon>Pseudomonadati</taxon>
        <taxon>Pseudomonadota</taxon>
        <taxon>Alphaproteobacteria</taxon>
        <taxon>Hyphomicrobiales</taxon>
        <taxon>Xanthobacteraceae</taxon>
        <taxon>Azorhizobium</taxon>
    </lineage>
</organism>
<protein>
    <recommendedName>
        <fullName evidence="1">Large ribosomal subunit protein bL17</fullName>
    </recommendedName>
    <alternativeName>
        <fullName evidence="2">50S ribosomal protein L17</fullName>
    </alternativeName>
</protein>
<comment type="subunit">
    <text evidence="1">Part of the 50S ribosomal subunit. Contacts protein L32.</text>
</comment>
<comment type="similarity">
    <text evidence="1">Belongs to the bacterial ribosomal protein bL17 family.</text>
</comment>
<reference key="1">
    <citation type="submission" date="2007-04" db="EMBL/GenBank/DDBJ databases">
        <title>Complete genome sequence of the nitrogen-fixing bacterium Azorhizobium caulinodans ORS571.</title>
        <authorList>
            <person name="Lee K.B."/>
            <person name="Backer P.D."/>
            <person name="Aono T."/>
            <person name="Liu C.T."/>
            <person name="Suzuki S."/>
            <person name="Suzuki T."/>
            <person name="Kaneko T."/>
            <person name="Yamada M."/>
            <person name="Tabata S."/>
            <person name="Kupfer D.M."/>
            <person name="Najar F.Z."/>
            <person name="Wiley G.B."/>
            <person name="Roe B."/>
            <person name="Binnewies T."/>
            <person name="Ussery D."/>
            <person name="Vereecke D."/>
            <person name="Gevers D."/>
            <person name="Holsters M."/>
            <person name="Oyaizu H."/>
        </authorList>
    </citation>
    <scope>NUCLEOTIDE SEQUENCE [LARGE SCALE GENOMIC DNA]</scope>
    <source>
        <strain>ATCC 43989 / DSM 5975 / JCM 20966 / LMG 6465 / NBRC 14845 / NCIMB 13405 / ORS 571</strain>
    </source>
</reference>
<gene>
    <name evidence="1" type="primary">rplQ</name>
    <name type="ordered locus">AZC_2529</name>
</gene>
<accession>A8IAN3</accession>